<organism>
    <name type="scientific">Cavia porcellus</name>
    <name type="common">Guinea pig</name>
    <dbReference type="NCBI Taxonomy" id="10141"/>
    <lineage>
        <taxon>Eukaryota</taxon>
        <taxon>Metazoa</taxon>
        <taxon>Chordata</taxon>
        <taxon>Craniata</taxon>
        <taxon>Vertebrata</taxon>
        <taxon>Euteleostomi</taxon>
        <taxon>Mammalia</taxon>
        <taxon>Eutheria</taxon>
        <taxon>Euarchontoglires</taxon>
        <taxon>Glires</taxon>
        <taxon>Rodentia</taxon>
        <taxon>Hystricomorpha</taxon>
        <taxon>Caviidae</taxon>
        <taxon>Cavia</taxon>
    </lineage>
</organism>
<reference key="1">
    <citation type="submission" date="2002-04" db="EMBL/GenBank/DDBJ databases">
        <title>Cloning and sequencing of guinea pig amylin, calcitonin, CGRP and adrenomedullin receptor subunits.</title>
        <authorList>
            <person name="Derst C."/>
            <person name="Preisig-Mueller R."/>
            <person name="Daut J."/>
        </authorList>
    </citation>
    <scope>NUCLEOTIDE SEQUENCE [MRNA]</scope>
</reference>
<name>RAMP3_CAVPO</name>
<gene>
    <name type="primary">RAMP3</name>
</gene>
<comment type="function">
    <text evidence="1">Plays a role in cardioprotection by reducing cardiac hypertrophy and perivascular fibrosis in a GPER1-dependent manner. Transports the calcitonin gene-related peptide type 1 receptor (CALCRL) and GPER1 to the plasma membrane. Acts as a receptor for adrenomedullin (AM) together with CALCRL (By similarity).</text>
</comment>
<comment type="subunit">
    <text evidence="1">Heterodimer of CALCRL and RAMP3. Interacts with GPER1.</text>
</comment>
<comment type="subcellular location">
    <subcellularLocation>
        <location evidence="1">Cell membrane</location>
        <topology evidence="1">Single-pass type I membrane protein</topology>
    </subcellularLocation>
    <subcellularLocation>
        <location evidence="1">Membrane</location>
        <topology evidence="1">Single-pass type I membrane protein</topology>
    </subcellularLocation>
    <text evidence="1">Moves from intracellular puncta to the plasma membrane in a RAMP3-dependent manner.</text>
</comment>
<comment type="similarity">
    <text evidence="3">Belongs to the RAMP family.</text>
</comment>
<proteinExistence type="evidence at transcript level"/>
<sequence length="146" mass="16869">MGTRSRRPQLLWLLLLCGTCARVCGCNETRMLERLPRCGKTFAERMREVAVWKWCDLSQFIVFYESFTNCTEEETVVVGCYWPNPLAQGFITGVHRQFFSNCTVDRTHWEDPPDEVLIPLIAVPILLTVAMTGLVVWRSKRTDQLP</sequence>
<keyword id="KW-1003">Cell membrane</keyword>
<keyword id="KW-1015">Disulfide bond</keyword>
<keyword id="KW-0325">Glycoprotein</keyword>
<keyword id="KW-0472">Membrane</keyword>
<keyword id="KW-0675">Receptor</keyword>
<keyword id="KW-1185">Reference proteome</keyword>
<keyword id="KW-0732">Signal</keyword>
<keyword id="KW-0812">Transmembrane</keyword>
<keyword id="KW-1133">Transmembrane helix</keyword>
<keyword id="KW-0813">Transport</keyword>
<protein>
    <recommendedName>
        <fullName>Receptor activity-modifying protein 3</fullName>
    </recommendedName>
</protein>
<evidence type="ECO:0000250" key="1"/>
<evidence type="ECO:0000255" key="2"/>
<evidence type="ECO:0000305" key="3"/>
<dbReference type="EMBL" id="AF484221">
    <property type="protein sequence ID" value="AAL91560.1"/>
    <property type="molecule type" value="mRNA"/>
</dbReference>
<dbReference type="RefSeq" id="NP_001166482.1">
    <property type="nucleotide sequence ID" value="NM_001173011.1"/>
</dbReference>
<dbReference type="SMR" id="Q8R4C4"/>
<dbReference type="FunCoup" id="Q8R4C4">
    <property type="interactions" value="17"/>
</dbReference>
<dbReference type="STRING" id="10141.ENSCPOP00000012027"/>
<dbReference type="GlyCosmos" id="Q8R4C4">
    <property type="glycosylation" value="3 sites, No reported glycans"/>
</dbReference>
<dbReference type="GeneID" id="100135612"/>
<dbReference type="KEGG" id="cpoc:100135612"/>
<dbReference type="CTD" id="10268"/>
<dbReference type="eggNOG" id="ENOG502S3C2">
    <property type="taxonomic scope" value="Eukaryota"/>
</dbReference>
<dbReference type="HOGENOM" id="CLU_116349_3_1_1"/>
<dbReference type="InParanoid" id="Q8R4C4"/>
<dbReference type="OrthoDB" id="9940331at2759"/>
<dbReference type="TreeFam" id="TF333286"/>
<dbReference type="Proteomes" id="UP000005447">
    <property type="component" value="Unassembled WGS sequence"/>
</dbReference>
<dbReference type="GO" id="GO:0009986">
    <property type="term" value="C:cell surface"/>
    <property type="evidence" value="ECO:0007669"/>
    <property type="project" value="TreeGrafter"/>
</dbReference>
<dbReference type="GO" id="GO:0005886">
    <property type="term" value="C:plasma membrane"/>
    <property type="evidence" value="ECO:0000250"/>
    <property type="project" value="UniProtKB"/>
</dbReference>
<dbReference type="GO" id="GO:0043235">
    <property type="term" value="C:receptor complex"/>
    <property type="evidence" value="ECO:0007669"/>
    <property type="project" value="TreeGrafter"/>
</dbReference>
<dbReference type="GO" id="GO:0015026">
    <property type="term" value="F:coreceptor activity"/>
    <property type="evidence" value="ECO:0007669"/>
    <property type="project" value="InterPro"/>
</dbReference>
<dbReference type="GO" id="GO:0006816">
    <property type="term" value="P:calcium ion transport"/>
    <property type="evidence" value="ECO:0007669"/>
    <property type="project" value="TreeGrafter"/>
</dbReference>
<dbReference type="GO" id="GO:0071392">
    <property type="term" value="P:cellular response to estradiol stimulus"/>
    <property type="evidence" value="ECO:0000250"/>
    <property type="project" value="UniProtKB"/>
</dbReference>
<dbReference type="GO" id="GO:0032870">
    <property type="term" value="P:cellular response to hormone stimulus"/>
    <property type="evidence" value="ECO:0007669"/>
    <property type="project" value="TreeGrafter"/>
</dbReference>
<dbReference type="GO" id="GO:0086103">
    <property type="term" value="P:G protein-coupled receptor signaling pathway involved in heart process"/>
    <property type="evidence" value="ECO:0000250"/>
    <property type="project" value="UniProtKB"/>
</dbReference>
<dbReference type="GO" id="GO:0006886">
    <property type="term" value="P:intracellular protein transport"/>
    <property type="evidence" value="ECO:0007669"/>
    <property type="project" value="InterPro"/>
</dbReference>
<dbReference type="GO" id="GO:1903078">
    <property type="term" value="P:positive regulation of protein localization to plasma membrane"/>
    <property type="evidence" value="ECO:0000250"/>
    <property type="project" value="UniProtKB"/>
</dbReference>
<dbReference type="GO" id="GO:0072659">
    <property type="term" value="P:protein localization to plasma membrane"/>
    <property type="evidence" value="ECO:0007669"/>
    <property type="project" value="TreeGrafter"/>
</dbReference>
<dbReference type="GO" id="GO:0031623">
    <property type="term" value="P:receptor internalization"/>
    <property type="evidence" value="ECO:0007669"/>
    <property type="project" value="TreeGrafter"/>
</dbReference>
<dbReference type="GO" id="GO:0008277">
    <property type="term" value="P:regulation of G protein-coupled receptor signaling pathway"/>
    <property type="evidence" value="ECO:0007669"/>
    <property type="project" value="InterPro"/>
</dbReference>
<dbReference type="FunFam" id="1.10.150.510:FF:000001">
    <property type="entry name" value="Receptor activity modifying protein 3"/>
    <property type="match status" value="1"/>
</dbReference>
<dbReference type="Gene3D" id="1.10.150.510">
    <property type="entry name" value="Receptor activity modifying family"/>
    <property type="match status" value="1"/>
</dbReference>
<dbReference type="InterPro" id="IPR006985">
    <property type="entry name" value="RAMP"/>
</dbReference>
<dbReference type="InterPro" id="IPR038126">
    <property type="entry name" value="RAMP_sf"/>
</dbReference>
<dbReference type="PANTHER" id="PTHR14076">
    <property type="entry name" value="RECEPTOR ACTIVITY MODIFYING PROTEIN RAMP"/>
    <property type="match status" value="1"/>
</dbReference>
<dbReference type="PANTHER" id="PTHR14076:SF2">
    <property type="entry name" value="RECEPTOR ACTIVITY-MODIFYING PROTEIN 3"/>
    <property type="match status" value="1"/>
</dbReference>
<dbReference type="Pfam" id="PF04901">
    <property type="entry name" value="RAMP"/>
    <property type="match status" value="1"/>
</dbReference>
<accession>Q8R4C4</accession>
<feature type="signal peptide" evidence="2">
    <location>
        <begin position="1"/>
        <end position="21"/>
    </location>
</feature>
<feature type="chain" id="PRO_0000030175" description="Receptor activity-modifying protein 3">
    <location>
        <begin position="22"/>
        <end position="146"/>
    </location>
</feature>
<feature type="topological domain" description="Extracellular" evidence="2">
    <location>
        <begin position="22"/>
        <end position="116"/>
    </location>
</feature>
<feature type="transmembrane region" description="Helical" evidence="2">
    <location>
        <begin position="117"/>
        <end position="136"/>
    </location>
</feature>
<feature type="topological domain" description="Cytoplasmic" evidence="2">
    <location>
        <begin position="137"/>
        <end position="146"/>
    </location>
</feature>
<feature type="glycosylation site" description="N-linked (GlcNAc...) asparagine" evidence="2">
    <location>
        <position position="27"/>
    </location>
</feature>
<feature type="glycosylation site" description="N-linked (GlcNAc...) asparagine" evidence="2">
    <location>
        <position position="69"/>
    </location>
</feature>
<feature type="glycosylation site" description="N-linked (GlcNAc...) asparagine" evidence="2">
    <location>
        <position position="101"/>
    </location>
</feature>
<feature type="disulfide bond" evidence="1">
    <location>
        <begin position="38"/>
        <end position="70"/>
    </location>
</feature>
<feature type="disulfide bond" evidence="1">
    <location>
        <begin position="55"/>
        <end position="102"/>
    </location>
</feature>